<evidence type="ECO:0000305" key="1"/>
<feature type="chain" id="PRO_0000214849" description="UPF0270 protein YheU">
    <location>
        <begin position="1"/>
        <end position="72"/>
    </location>
</feature>
<accession>P67626</accession>
<accession>P45536</accession>
<name>YHEU_ECO57</name>
<reference key="1">
    <citation type="journal article" date="2001" name="Nature">
        <title>Genome sequence of enterohaemorrhagic Escherichia coli O157:H7.</title>
        <authorList>
            <person name="Perna N.T."/>
            <person name="Plunkett G. III"/>
            <person name="Burland V."/>
            <person name="Mau B."/>
            <person name="Glasner J.D."/>
            <person name="Rose D.J."/>
            <person name="Mayhew G.F."/>
            <person name="Evans P.S."/>
            <person name="Gregor J."/>
            <person name="Kirkpatrick H.A."/>
            <person name="Posfai G."/>
            <person name="Hackett J."/>
            <person name="Klink S."/>
            <person name="Boutin A."/>
            <person name="Shao Y."/>
            <person name="Miller L."/>
            <person name="Grotbeck E.J."/>
            <person name="Davis N.W."/>
            <person name="Lim A."/>
            <person name="Dimalanta E.T."/>
            <person name="Potamousis K."/>
            <person name="Apodaca J."/>
            <person name="Anantharaman T.S."/>
            <person name="Lin J."/>
            <person name="Yen G."/>
            <person name="Schwartz D.C."/>
            <person name="Welch R.A."/>
            <person name="Blattner F.R."/>
        </authorList>
    </citation>
    <scope>NUCLEOTIDE SEQUENCE [LARGE SCALE GENOMIC DNA]</scope>
    <source>
        <strain>O157:H7 / EDL933 / ATCC 700927 / EHEC</strain>
    </source>
</reference>
<reference key="2">
    <citation type="journal article" date="2001" name="DNA Res.">
        <title>Complete genome sequence of enterohemorrhagic Escherichia coli O157:H7 and genomic comparison with a laboratory strain K-12.</title>
        <authorList>
            <person name="Hayashi T."/>
            <person name="Makino K."/>
            <person name="Ohnishi M."/>
            <person name="Kurokawa K."/>
            <person name="Ishii K."/>
            <person name="Yokoyama K."/>
            <person name="Han C.-G."/>
            <person name="Ohtsubo E."/>
            <person name="Nakayama K."/>
            <person name="Murata T."/>
            <person name="Tanaka M."/>
            <person name="Tobe T."/>
            <person name="Iida T."/>
            <person name="Takami H."/>
            <person name="Honda T."/>
            <person name="Sasakawa C."/>
            <person name="Ogasawara N."/>
            <person name="Yasunaga T."/>
            <person name="Kuhara S."/>
            <person name="Shiba T."/>
            <person name="Hattori M."/>
            <person name="Shinagawa H."/>
        </authorList>
    </citation>
    <scope>NUCLEOTIDE SEQUENCE [LARGE SCALE GENOMIC DNA]</scope>
    <source>
        <strain>O157:H7 / Sakai / RIMD 0509952 / EHEC</strain>
    </source>
</reference>
<dbReference type="EMBL" id="AE005174">
    <property type="protein sequence ID" value="AAG58462.1"/>
    <property type="molecule type" value="Genomic_DNA"/>
</dbReference>
<dbReference type="EMBL" id="BA000007">
    <property type="protein sequence ID" value="BAB37628.1"/>
    <property type="molecule type" value="Genomic_DNA"/>
</dbReference>
<dbReference type="PIR" id="B86000">
    <property type="entry name" value="B86000"/>
</dbReference>
<dbReference type="PIR" id="E91154">
    <property type="entry name" value="E91154"/>
</dbReference>
<dbReference type="RefSeq" id="NP_312232.1">
    <property type="nucleotide sequence ID" value="NC_002695.1"/>
</dbReference>
<dbReference type="RefSeq" id="WP_000907085.1">
    <property type="nucleotide sequence ID" value="NZ_VOAI01000004.1"/>
</dbReference>
<dbReference type="SMR" id="P67626"/>
<dbReference type="STRING" id="155864.Z4715"/>
<dbReference type="GeneID" id="915939"/>
<dbReference type="KEGG" id="ece:Z4715"/>
<dbReference type="KEGG" id="ecs:ECs_4205"/>
<dbReference type="PATRIC" id="fig|386585.9.peg.4389"/>
<dbReference type="eggNOG" id="COG3089">
    <property type="taxonomic scope" value="Bacteria"/>
</dbReference>
<dbReference type="HOGENOM" id="CLU_186759_1_0_6"/>
<dbReference type="OMA" id="MIIPWKE"/>
<dbReference type="Proteomes" id="UP000000558">
    <property type="component" value="Chromosome"/>
</dbReference>
<dbReference type="Proteomes" id="UP000002519">
    <property type="component" value="Chromosome"/>
</dbReference>
<dbReference type="Gene3D" id="1.10.10.610">
    <property type="entry name" value="YehU-like"/>
    <property type="match status" value="1"/>
</dbReference>
<dbReference type="HAMAP" id="MF_00690">
    <property type="entry name" value="UPF0270"/>
    <property type="match status" value="1"/>
</dbReference>
<dbReference type="InterPro" id="IPR010648">
    <property type="entry name" value="UPF0270"/>
</dbReference>
<dbReference type="InterPro" id="IPR036685">
    <property type="entry name" value="YehU-like_sf"/>
</dbReference>
<dbReference type="NCBIfam" id="NF003438">
    <property type="entry name" value="PRK04966.1"/>
    <property type="match status" value="1"/>
</dbReference>
<dbReference type="Pfam" id="PF06794">
    <property type="entry name" value="UPF0270"/>
    <property type="match status" value="1"/>
</dbReference>
<dbReference type="PIRSF" id="PIRSF006169">
    <property type="entry name" value="UCP006169"/>
    <property type="match status" value="1"/>
</dbReference>
<dbReference type="SUPFAM" id="SSF118001">
    <property type="entry name" value="YehU-like"/>
    <property type="match status" value="1"/>
</dbReference>
<organism>
    <name type="scientific">Escherichia coli O157:H7</name>
    <dbReference type="NCBI Taxonomy" id="83334"/>
    <lineage>
        <taxon>Bacteria</taxon>
        <taxon>Pseudomonadati</taxon>
        <taxon>Pseudomonadota</taxon>
        <taxon>Gammaproteobacteria</taxon>
        <taxon>Enterobacterales</taxon>
        <taxon>Enterobacteriaceae</taxon>
        <taxon>Escherichia</taxon>
    </lineage>
</organism>
<protein>
    <recommendedName>
        <fullName>UPF0270 protein YheU</fullName>
    </recommendedName>
</protein>
<proteinExistence type="inferred from homology"/>
<keyword id="KW-1185">Reference proteome</keyword>
<gene>
    <name type="primary">yheU</name>
    <name type="ordered locus">Z4715</name>
    <name type="ordered locus">ECs4205</name>
</gene>
<sequence>MLIPWQDLSPETLENLIESFVLREGTDYGEHERTLEQKVADVKRQLQCGEAVLVWSELHETVNIMPRSQFRE</sequence>
<comment type="similarity">
    <text evidence="1">Belongs to the UPF0270 family.</text>
</comment>